<dbReference type="EMBL" id="AF020427">
    <property type="protein sequence ID" value="AAC24238.1"/>
    <property type="molecule type" value="Genomic_DNA"/>
</dbReference>
<dbReference type="SMR" id="O16852"/>
<dbReference type="GO" id="GO:0043626">
    <property type="term" value="C:PCNA complex"/>
    <property type="evidence" value="ECO:0007669"/>
    <property type="project" value="TreeGrafter"/>
</dbReference>
<dbReference type="GO" id="GO:0003677">
    <property type="term" value="F:DNA binding"/>
    <property type="evidence" value="ECO:0007669"/>
    <property type="project" value="UniProtKB-KW"/>
</dbReference>
<dbReference type="GO" id="GO:0030337">
    <property type="term" value="F:DNA polymerase processivity factor activity"/>
    <property type="evidence" value="ECO:0007669"/>
    <property type="project" value="InterPro"/>
</dbReference>
<dbReference type="GO" id="GO:0006272">
    <property type="term" value="P:leading strand elongation"/>
    <property type="evidence" value="ECO:0007669"/>
    <property type="project" value="TreeGrafter"/>
</dbReference>
<dbReference type="GO" id="GO:0006298">
    <property type="term" value="P:mismatch repair"/>
    <property type="evidence" value="ECO:0007669"/>
    <property type="project" value="TreeGrafter"/>
</dbReference>
<dbReference type="GO" id="GO:0006275">
    <property type="term" value="P:regulation of DNA replication"/>
    <property type="evidence" value="ECO:0007669"/>
    <property type="project" value="InterPro"/>
</dbReference>
<dbReference type="GO" id="GO:0019985">
    <property type="term" value="P:translesion synthesis"/>
    <property type="evidence" value="ECO:0007669"/>
    <property type="project" value="TreeGrafter"/>
</dbReference>
<dbReference type="CDD" id="cd00577">
    <property type="entry name" value="PCNA"/>
    <property type="match status" value="1"/>
</dbReference>
<dbReference type="FunFam" id="3.10.150.10:FF:000006">
    <property type="entry name" value="Proliferating cell nuclear antigen"/>
    <property type="match status" value="1"/>
</dbReference>
<dbReference type="FunFam" id="3.10.150.10:FF:000008">
    <property type="entry name" value="Proliferating cell nuclear antigen"/>
    <property type="match status" value="1"/>
</dbReference>
<dbReference type="FunFam" id="3.70.10.10:FF:000001">
    <property type="entry name" value="Proliferating cell nuclear antigen"/>
    <property type="match status" value="1"/>
</dbReference>
<dbReference type="Gene3D" id="3.70.10.10">
    <property type="match status" value="1"/>
</dbReference>
<dbReference type="HAMAP" id="MF_00317">
    <property type="entry name" value="DNApol_clamp_arch"/>
    <property type="match status" value="1"/>
</dbReference>
<dbReference type="InterPro" id="IPR046938">
    <property type="entry name" value="DNA_clamp_sf"/>
</dbReference>
<dbReference type="InterPro" id="IPR000730">
    <property type="entry name" value="Pr_cel_nuc_antig"/>
</dbReference>
<dbReference type="InterPro" id="IPR022649">
    <property type="entry name" value="Pr_cel_nuc_antig_C"/>
</dbReference>
<dbReference type="InterPro" id="IPR022659">
    <property type="entry name" value="Pr_cel_nuc_antig_CS"/>
</dbReference>
<dbReference type="InterPro" id="IPR022648">
    <property type="entry name" value="Pr_cel_nuc_antig_N"/>
</dbReference>
<dbReference type="InterPro" id="IPR010916">
    <property type="entry name" value="TonB_box_CS"/>
</dbReference>
<dbReference type="NCBIfam" id="TIGR00590">
    <property type="entry name" value="pcna"/>
    <property type="match status" value="1"/>
</dbReference>
<dbReference type="PANTHER" id="PTHR11352">
    <property type="entry name" value="PROLIFERATING CELL NUCLEAR ANTIGEN"/>
    <property type="match status" value="1"/>
</dbReference>
<dbReference type="PANTHER" id="PTHR11352:SF0">
    <property type="entry name" value="PROLIFERATING CELL NUCLEAR ANTIGEN"/>
    <property type="match status" value="1"/>
</dbReference>
<dbReference type="Pfam" id="PF02747">
    <property type="entry name" value="PCNA_C"/>
    <property type="match status" value="1"/>
</dbReference>
<dbReference type="Pfam" id="PF00705">
    <property type="entry name" value="PCNA_N"/>
    <property type="match status" value="1"/>
</dbReference>
<dbReference type="PRINTS" id="PR00339">
    <property type="entry name" value="PCNACYCLIN"/>
</dbReference>
<dbReference type="SUPFAM" id="SSF55979">
    <property type="entry name" value="DNA clamp"/>
    <property type="match status" value="2"/>
</dbReference>
<dbReference type="PROSITE" id="PS01251">
    <property type="entry name" value="PCNA_1"/>
    <property type="match status" value="1"/>
</dbReference>
<dbReference type="PROSITE" id="PS00293">
    <property type="entry name" value="PCNA_2"/>
    <property type="match status" value="1"/>
</dbReference>
<protein>
    <recommendedName>
        <fullName>Proliferating cell nuclear antigen</fullName>
        <shortName>PCNA</shortName>
    </recommendedName>
    <alternativeName>
        <fullName>Cyclin</fullName>
    </alternativeName>
</protein>
<name>PCNA_SARCR</name>
<keyword id="KW-0235">DNA replication</keyword>
<keyword id="KW-0238">DNA-binding</keyword>
<keyword id="KW-0539">Nucleus</keyword>
<gene>
    <name type="primary">PCNA</name>
</gene>
<comment type="function">
    <text>This protein is an auxiliary protein of DNA polymerase delta and is involved in the control of eukaryotic DNA replication by increasing the polymerase's processibility during elongation of the leading strand.</text>
</comment>
<comment type="subunit">
    <text evidence="1">Homotrimer. Forms a complex with activator 1 heteropentamer in the presence of ATP (By similarity).</text>
</comment>
<comment type="subcellular location">
    <subcellularLocation>
        <location>Nucleus</location>
    </subcellularLocation>
</comment>
<comment type="similarity">
    <text evidence="3">Belongs to the PCNA family.</text>
</comment>
<organism>
    <name type="scientific">Sarcophaga crassipalpis</name>
    <name type="common">Flesh fly</name>
    <dbReference type="NCBI Taxonomy" id="59312"/>
    <lineage>
        <taxon>Eukaryota</taxon>
        <taxon>Metazoa</taxon>
        <taxon>Ecdysozoa</taxon>
        <taxon>Arthropoda</taxon>
        <taxon>Hexapoda</taxon>
        <taxon>Insecta</taxon>
        <taxon>Pterygota</taxon>
        <taxon>Neoptera</taxon>
        <taxon>Endopterygota</taxon>
        <taxon>Diptera</taxon>
        <taxon>Brachycera</taxon>
        <taxon>Muscomorpha</taxon>
        <taxon>Oestroidea</taxon>
        <taxon>Sarcophagidae</taxon>
        <taxon>Sarcophaga</taxon>
        <taxon>Liopygia</taxon>
    </lineage>
</organism>
<feature type="chain" id="PRO_0000149171" description="Proliferating cell nuclear antigen">
    <location>
        <begin position="1"/>
        <end position="260"/>
    </location>
</feature>
<feature type="DNA-binding region" evidence="2">
    <location>
        <begin position="61"/>
        <end position="80"/>
    </location>
</feature>
<accession>O16852</accession>
<evidence type="ECO:0000250" key="1"/>
<evidence type="ECO:0000255" key="2"/>
<evidence type="ECO:0000305" key="3"/>
<sequence>MFEARLINATILKKILDAIKELLHEATFECSESGIQLQAMDNSHVSLGSLTLRSDGFDKFRCDRNISMGMNLGSMAKILKCANNDDTVTVKAQDNADTVTFMFESPNHEKVSDYEMKLMNLDQEHLGIPETDYSCVVRMPSMEFARICRDLAQFSESMLICCTKEGVKFSASGDVGSANVKLAQTSSVDKEEEAVIIEMQEPVTLTFACRYLNAFTKATPLSAQVQLSMCADVPLVVEYAIKELGHIRYYLAPKIEDDES</sequence>
<reference key="1">
    <citation type="journal article" date="1998" name="Gene">
        <title>Cloning and sequencing of proliferating cell nuclear antigen (PCNA) from the flesh fly, Sarcophaga crassipalpis, and its expression in response to cold shock and heat shock.</title>
        <authorList>
            <person name="Tammariello S.P."/>
            <person name="Denlinger D.L."/>
        </authorList>
    </citation>
    <scope>NUCLEOTIDE SEQUENCE [GENOMIC DNA]</scope>
</reference>
<proteinExistence type="inferred from homology"/>